<sequence>MSVAIRKRSWEEHVTHWMGQPFNSDDRNTACHHGLVADSLQASMEKDATLNVDRKEKCVSLPDCCHGSELRDFPGRPMGHLSKDVDENDSHEGEDQFLSLEASTETLVHVSDEDNNADLCLTDDKQVLNTQGQKTSGQHMIQGAGSLEKALPIIQSNQVSSNSWGIAGETELALVKESGERKVTDSISKSLELCNEISLSEIKDAPKVNAVDTLNVKDIAPEKQLLNSAVIAQQRRKPDPPKDENERSTCNVVQNEFLDTPCTNRGLPLLKTDFGSCLLQPPSCPNGMSAENGLEKSGFSQHQNKSPPKVKAEDGMQCLQLKETLATQEPTDNQVRLRKRKEIREDRDRARLDSMVLLIMKLDQLDQDIENALSTSSSPSGTPTNLRRHVPDLESGSESGADTISVNQTRVNLSSDTESTDLPSSTPVANSGTKPKTTAIQGISEKEKAEIEAKEACDWLRATGFPQYAQLYEDFLFPIDISLVKREHDFLDRDAIEALCRRLNTLNKCAVMKLEISPHRKRSDDSDEDEPCAISGKWTFQRDSKRWSRLEEFDVFSPKQDLVPGSPDDSHPKDGPSPGGTLMDLSERQEVSSVRSLSSTGSLPSHAPPSEDAATPRTNSVISVCSSSNLAGNDDSFGSLPSPKELSSFSFSMKGHEKTAKSKTRSLLKRMESLKLKSSHHSKHKAPSKLGLIISGPILQEGMDEEKLKQLNCVEISALNGNRINVPMVRKRSVSNSTQTSSSSSQSETSSAVSTPSPVTRTRSLSACNKRVGMYLEGFDPFNQSTFNNVVEQNFKNRESYPEDTVFYIPEDHKPGTFPKALTNGSFSPSGNNGSVNWRTGSFHGPGHISLRRENSSDSPKELKRRNSSSSMSSRLSIYDNVPGSILYSSSGDLADLENEDIFPELDDILYHVKGMQRIVNQWSEKFSDEGDSDSALDSVSPCPSSPKQIHLDVDNDRTTPSDLDSTGNSLNEPEEPSEIPERRDSGVGASLTRSNRHRLRWHSFQSSHRPSLNSVSLQINCQSVAQMNLLQKYSLLKLTALLEKYTPSNKHGFSWAVPKFMKRIKVPDYKDRSVFGVPLTVNVQRTGQPLPQSIQQAMRYLRNHCLDQVGLFRKSGVKSRIQALRQMNEGAIDCVNYEGQSAYDVADMLKQYFRDLPEPLMTNKLSETFLQIYQYVPKDQRLQAIKAAIMLLPDENREVLQTLLYFLSDVTAAVKENQMTPTNLAVCLAPSLFHLNTLKRENSSPRVMQRKQSLGKPDQKDLNENLAATQGLAHMIAECKKLFQVPEEMSRCRNSYTEQELKPLTLEALGHLGNDDSADYQHFLQDCVDGLFKEVKEKFKGWVSYSTSEQAELSYKKVSEGPPLRLWRSVIEVPAVPEEILKRLLKEQHLWDVDLLDSKVIEILDSQTEIYQYVQNSMAPHPARDYVVLRTWRTNLPKGACALLLTSVDHDRAPVVGVRVNVLLSRYLIEPCGPGKSKLTYMCRVDLRGHMPEWYTKSFGHLCAAEVVKIRDSFSNQNTETKDTKSR</sequence>
<proteinExistence type="evidence at protein level"/>
<feature type="chain" id="PRO_0000056707" description="Rho GTPase-activating protein 7">
    <location>
        <begin position="1"/>
        <end position="1528"/>
    </location>
</feature>
<feature type="domain" description="SAM">
    <location>
        <begin position="448"/>
        <end position="515"/>
    </location>
</feature>
<feature type="domain" description="Rho-GAP" evidence="2">
    <location>
        <begin position="1078"/>
        <end position="1284"/>
    </location>
</feature>
<feature type="domain" description="START" evidence="3">
    <location>
        <begin position="1314"/>
        <end position="1521"/>
    </location>
</feature>
<feature type="region of interest" description="Disordered" evidence="4">
    <location>
        <begin position="72"/>
        <end position="94"/>
    </location>
</feature>
<feature type="region of interest" description="Disordered" evidence="4">
    <location>
        <begin position="288"/>
        <end position="310"/>
    </location>
</feature>
<feature type="region of interest" description="Disordered" evidence="4">
    <location>
        <begin position="372"/>
        <end position="436"/>
    </location>
</feature>
<feature type="region of interest" description="Disordered" evidence="4">
    <location>
        <begin position="558"/>
        <end position="617"/>
    </location>
</feature>
<feature type="region of interest" description="Focal adhesion-targeting (FAT)">
    <location>
        <begin position="710"/>
        <end position="884"/>
    </location>
</feature>
<feature type="region of interest" description="Disordered" evidence="4">
    <location>
        <begin position="732"/>
        <end position="764"/>
    </location>
</feature>
<feature type="region of interest" description="Disordered" evidence="4">
    <location>
        <begin position="829"/>
        <end position="876"/>
    </location>
</feature>
<feature type="region of interest" description="Disordered" evidence="4">
    <location>
        <begin position="928"/>
        <end position="990"/>
    </location>
</feature>
<feature type="region of interest" description="Polybasic cluster (PBR)">
    <location>
        <begin position="1051"/>
        <end position="1073"/>
    </location>
</feature>
<feature type="compositionally biased region" description="Basic and acidic residues" evidence="4">
    <location>
        <begin position="81"/>
        <end position="94"/>
    </location>
</feature>
<feature type="compositionally biased region" description="Low complexity" evidence="4">
    <location>
        <begin position="374"/>
        <end position="384"/>
    </location>
</feature>
<feature type="compositionally biased region" description="Polar residues" evidence="4">
    <location>
        <begin position="396"/>
        <end position="436"/>
    </location>
</feature>
<feature type="compositionally biased region" description="Low complexity" evidence="4">
    <location>
        <begin position="591"/>
        <end position="605"/>
    </location>
</feature>
<feature type="compositionally biased region" description="Low complexity" evidence="4">
    <location>
        <begin position="734"/>
        <end position="760"/>
    </location>
</feature>
<feature type="compositionally biased region" description="Basic and acidic residues" evidence="4">
    <location>
        <begin position="851"/>
        <end position="862"/>
    </location>
</feature>
<feature type="compositionally biased region" description="Polar residues" evidence="4">
    <location>
        <begin position="936"/>
        <end position="948"/>
    </location>
</feature>
<feature type="compositionally biased region" description="Basic and acidic residues" evidence="4">
    <location>
        <begin position="950"/>
        <end position="960"/>
    </location>
</feature>
<feature type="compositionally biased region" description="Polar residues" evidence="4">
    <location>
        <begin position="961"/>
        <end position="972"/>
    </location>
</feature>
<feature type="site" description="Arginine finger; crucial for GTP hydrolysis by stabilizing the transition state" evidence="2">
    <location>
        <position position="1114"/>
    </location>
</feature>
<feature type="modified residue" description="Phosphoserine" evidence="27">
    <location>
        <position position="523"/>
    </location>
</feature>
<feature type="modified residue" description="Phosphoserine" evidence="27">
    <location>
        <position position="526"/>
    </location>
</feature>
<feature type="modified residue" description="Phosphoserine" evidence="1">
    <location>
        <position position="566"/>
    </location>
</feature>
<feature type="modified residue" description="Phosphoserine" evidence="27">
    <location>
        <position position="757"/>
    </location>
</feature>
<feature type="splice variant" id="VSP_037871" description="In isoform 1 and isoform 4." evidence="21 24 25">
    <location>
        <begin position="1"/>
        <end position="437"/>
    </location>
</feature>
<feature type="splice variant" id="VSP_053836" description="In isoform 6." evidence="23">
    <original>MSVAIRKRSWEEHVTHWMGQPFNSDDRNTACHHGLVADSLQASME</original>
    <variation>MGDPKAHVMARPLRAPLRRSFSDHIRDSTARALDVIWKNTRDRRL</variation>
    <location>
        <begin position="1"/>
        <end position="45"/>
    </location>
</feature>
<feature type="splice variant" id="VSP_053837" description="In isoform 6." evidence="23">
    <location>
        <begin position="46"/>
        <end position="448"/>
    </location>
</feature>
<feature type="splice variant" id="VSP_044651" description="In isoform 4." evidence="21">
    <location>
        <begin position="438"/>
        <end position="511"/>
    </location>
</feature>
<feature type="splice variant" id="VSP_037872" description="In isoform 1." evidence="24 25">
    <original>TAIQGISEKEKAE</original>
    <variation>MCRKKPDTMILTQ</variation>
    <location>
        <begin position="438"/>
        <end position="450"/>
    </location>
</feature>
<feature type="splice variant" id="VSP_037873" description="In isoform 3." evidence="21">
    <original>EIEAKEACDWLRATGFPQYAQLYEDFLFPIDISLVKREHDFLDRDAIEA</original>
    <variation>AVKSVKLEVDEDKSTKGSNFSNSEVAIGLSPYTFPQKRLFHVAGEENIT</variation>
    <location>
        <begin position="450"/>
        <end position="498"/>
    </location>
</feature>
<feature type="splice variant" id="VSP_046331" description="In isoform 5." evidence="22">
    <original>EIEAKEACDWLRAT</original>
    <variation>GKLTFWFCFLANLF</variation>
    <location>
        <begin position="450"/>
        <end position="463"/>
    </location>
</feature>
<feature type="splice variant" id="VSP_046332" description="In isoform 5." evidence="22">
    <location>
        <begin position="464"/>
        <end position="1528"/>
    </location>
</feature>
<feature type="splice variant" id="VSP_037874" description="In isoform 3." evidence="21">
    <location>
        <begin position="499"/>
        <end position="1528"/>
    </location>
</feature>
<feature type="sequence variant" id="VAR_059293" description="In dbSNP:rs34575560.">
    <original>R</original>
    <variation>C</variation>
    <location>
        <position position="27"/>
    </location>
</feature>
<feature type="sequence variant" id="VAR_059294" description="In dbSNP:rs3816748.">
    <original>L</original>
    <variation>V</variation>
    <location>
        <position position="81"/>
    </location>
</feature>
<feature type="sequence variant" id="VAR_059295" description="In dbSNP:rs11203495." evidence="6 7">
    <original>Q</original>
    <variation>H</variation>
    <location>
        <position position="254"/>
    </location>
</feature>
<feature type="sequence variant" id="VAR_059296" description="In dbSNP:rs11203494." evidence="6 7 8">
    <original>N</original>
    <variation>D</variation>
    <location>
        <position position="255"/>
    </location>
</feature>
<feature type="sequence variant" id="VAR_059297" description="In dbSNP:rs3816747." evidence="6 7">
    <original>T</original>
    <variation>I</variation>
    <location>
        <position position="260"/>
    </location>
</feature>
<feature type="sequence variant" id="VAR_059298" description="In dbSNP:rs34591797.">
    <original>Q</original>
    <variation>H</variation>
    <location>
        <position position="320"/>
    </location>
</feature>
<feature type="sequence variant" id="VAR_014229" description="In dbSNP:rs1044092." evidence="5 18">
    <original>N</original>
    <variation>S</variation>
    <location>
        <position position="712"/>
    </location>
</feature>
<feature type="sequence variant" id="VAR_014230" description="In dbSNP:rs532841." evidence="5 6 7 19 20">
    <original>V</original>
    <variation>M</variation>
    <location>
        <position position="791"/>
    </location>
</feature>
<feature type="sequence variant" id="VAR_014231" description="In dbSNP:rs121908500." evidence="5">
    <original>T</original>
    <variation>A</variation>
    <location>
        <position position="959"/>
    </location>
</feature>
<feature type="sequence variant" id="VAR_014232" description="In dbSNP:rs149295187." evidence="5">
    <original>H</original>
    <variation>Q</variation>
    <location>
        <position position="998"/>
    </location>
</feature>
<feature type="sequence variant" id="VAR_014233" evidence="5">
    <original>V</original>
    <variation>A</variation>
    <location>
        <position position="1025"/>
    </location>
</feature>
<feature type="sequence variant" id="VAR_014234" description="In dbSNP:rs1044093." evidence="5 18">
    <original>E</original>
    <variation>V</variation>
    <location>
        <position position="1199"/>
    </location>
</feature>
<feature type="sequence variant" id="VAR_014235" description="In dbSNP:rs1044094." evidence="5 18">
    <original>S</original>
    <variation>C</variation>
    <location>
        <position position="1209"/>
    </location>
</feature>
<feature type="mutagenesis site" description="Abolishes interaction with EF1A1." evidence="11">
    <original>F</original>
    <variation>G</variation>
    <location>
        <position position="475"/>
    </location>
</feature>
<feature type="mutagenesis site" description="Abolishes interaction with EF1A1." evidence="11">
    <original>L</original>
    <variation>G</variation>
    <location>
        <position position="476"/>
    </location>
</feature>
<feature type="mutagenesis site" description="Abolishes interaction with TNS4 and results in diffuse cytoplasmic localization." evidence="9">
    <original>S</original>
    <variation>A</variation>
    <location>
        <position position="877"/>
    </location>
</feature>
<feature type="mutagenesis site" description="Unable to displace endogenous DLC1 from focal adhesions. Abolishes interaction with TNS4 and results in diffuse cytoplasmic localization." evidence="9 10">
    <original>Y</original>
    <variation>F</variation>
    <location>
        <position position="879"/>
    </location>
</feature>
<feature type="mutagenesis site" description="No catalytic activity." evidence="11">
    <original>R</original>
    <variation>E</variation>
    <location>
        <position position="1114"/>
    </location>
</feature>
<feature type="sequence conflict" description="In Ref. 5; BAB14996." evidence="26" ref="5">
    <original>S</original>
    <variation>C</variation>
    <location>
        <position position="43"/>
    </location>
</feature>
<feature type="sequence conflict" description="In Ref. 5; BAB14996." evidence="26" ref="5">
    <original>T</original>
    <variation>I</variation>
    <location>
        <position position="130"/>
    </location>
</feature>
<feature type="sequence conflict" description="In Ref. 4; BAB21814." evidence="26" ref="4">
    <original>H</original>
    <variation>L</variation>
    <location>
        <position position="571"/>
    </location>
</feature>
<feature type="sequence conflict" description="In Ref. 1; AAB87700." evidence="26" ref="1">
    <original>R</original>
    <variation>K</variation>
    <location>
        <position position="1114"/>
    </location>
</feature>
<feature type="sequence conflict" description="In Ref. 1; AAB87700." evidence="26" ref="1">
    <original>P</original>
    <variation>R</variation>
    <location>
        <position position="1364"/>
    </location>
</feature>
<feature type="helix" evidence="28">
    <location>
        <begin position="449"/>
        <end position="463"/>
    </location>
</feature>
<feature type="helix" evidence="28">
    <location>
        <begin position="468"/>
        <end position="473"/>
    </location>
</feature>
<feature type="turn" evidence="29">
    <location>
        <begin position="474"/>
        <end position="476"/>
    </location>
</feature>
<feature type="helix" evidence="28">
    <location>
        <begin position="481"/>
        <end position="487"/>
    </location>
</feature>
<feature type="turn" evidence="28">
    <location>
        <begin position="488"/>
        <end position="490"/>
    </location>
</feature>
<feature type="helix" evidence="28">
    <location>
        <begin position="493"/>
        <end position="509"/>
    </location>
</feature>
<feature type="turn" evidence="28">
    <location>
        <begin position="510"/>
        <end position="514"/>
    </location>
</feature>
<feature type="helix" evidence="31">
    <location>
        <begin position="906"/>
        <end position="920"/>
    </location>
</feature>
<feature type="helix" evidence="30">
    <location>
        <begin position="1080"/>
        <end position="1087"/>
    </location>
</feature>
<feature type="strand" evidence="30">
    <location>
        <begin position="1088"/>
        <end position="1091"/>
    </location>
</feature>
<feature type="helix" evidence="30">
    <location>
        <begin position="1093"/>
        <end position="1105"/>
    </location>
</feature>
<feature type="turn" evidence="30">
    <location>
        <begin position="1110"/>
        <end position="1114"/>
    </location>
</feature>
<feature type="helix" evidence="30">
    <location>
        <begin position="1119"/>
        <end position="1129"/>
    </location>
</feature>
<feature type="strand" evidence="30">
    <location>
        <begin position="1131"/>
        <end position="1134"/>
    </location>
</feature>
<feature type="helix" evidence="30">
    <location>
        <begin position="1143"/>
        <end position="1156"/>
    </location>
</feature>
<feature type="strand" evidence="30">
    <location>
        <begin position="1157"/>
        <end position="1159"/>
    </location>
</feature>
<feature type="helix" evidence="30">
    <location>
        <begin position="1166"/>
        <end position="1176"/>
    </location>
</feature>
<feature type="helix" evidence="30">
    <location>
        <begin position="1179"/>
        <end position="1181"/>
    </location>
</feature>
<feature type="helix" evidence="30">
    <location>
        <begin position="1182"/>
        <end position="1191"/>
    </location>
</feature>
<feature type="helix" evidence="30">
    <location>
        <begin position="1195"/>
        <end position="1213"/>
    </location>
</feature>
<feature type="helix" evidence="30">
    <location>
        <begin position="1215"/>
        <end position="1218"/>
    </location>
</feature>
<feature type="helix" evidence="30">
    <location>
        <begin position="1222"/>
        <end position="1234"/>
    </location>
</feature>
<feature type="helix" evidence="30">
    <location>
        <begin position="1260"/>
        <end position="1278"/>
    </location>
</feature>
<feature type="sequence conflict" description="In Ref. 8; ABX83661/ABX83662." evidence="26" ref="8">
    <original>EA</original>
    <variation>KP</variation>
    <location sequence="Q96QB1-6">
        <begin position="49"/>
        <end position="50"/>
    </location>
</feature>
<dbReference type="EMBL" id="AF035119">
    <property type="protein sequence ID" value="AAB87700.1"/>
    <property type="molecule type" value="mRNA"/>
</dbReference>
<dbReference type="EMBL" id="AF026219">
    <property type="protein sequence ID" value="AAB81637.1"/>
    <property type="status" value="ALT_INIT"/>
    <property type="molecule type" value="mRNA"/>
</dbReference>
<dbReference type="EMBL" id="AF408781">
    <property type="protein sequence ID" value="AAK97501.1"/>
    <property type="molecule type" value="Genomic_DNA"/>
</dbReference>
<dbReference type="EMBL" id="AF408768">
    <property type="protein sequence ID" value="AAK97501.1"/>
    <property type="status" value="JOINED"/>
    <property type="molecule type" value="Genomic_DNA"/>
</dbReference>
<dbReference type="EMBL" id="AF408769">
    <property type="protein sequence ID" value="AAK97501.1"/>
    <property type="status" value="JOINED"/>
    <property type="molecule type" value="Genomic_DNA"/>
</dbReference>
<dbReference type="EMBL" id="AF408770">
    <property type="protein sequence ID" value="AAK97501.1"/>
    <property type="status" value="JOINED"/>
    <property type="molecule type" value="Genomic_DNA"/>
</dbReference>
<dbReference type="EMBL" id="AF408771">
    <property type="protein sequence ID" value="AAK97501.1"/>
    <property type="status" value="JOINED"/>
    <property type="molecule type" value="Genomic_DNA"/>
</dbReference>
<dbReference type="EMBL" id="AF408772">
    <property type="protein sequence ID" value="AAK97501.1"/>
    <property type="status" value="JOINED"/>
    <property type="molecule type" value="Genomic_DNA"/>
</dbReference>
<dbReference type="EMBL" id="AF408773">
    <property type="protein sequence ID" value="AAK97501.1"/>
    <property type="status" value="JOINED"/>
    <property type="molecule type" value="Genomic_DNA"/>
</dbReference>
<dbReference type="EMBL" id="AF408774">
    <property type="protein sequence ID" value="AAK97501.1"/>
    <property type="status" value="JOINED"/>
    <property type="molecule type" value="Genomic_DNA"/>
</dbReference>
<dbReference type="EMBL" id="AF408775">
    <property type="protein sequence ID" value="AAK97501.1"/>
    <property type="status" value="JOINED"/>
    <property type="molecule type" value="Genomic_DNA"/>
</dbReference>
<dbReference type="EMBL" id="AF408776">
    <property type="protein sequence ID" value="AAK97501.1"/>
    <property type="status" value="JOINED"/>
    <property type="molecule type" value="Genomic_DNA"/>
</dbReference>
<dbReference type="EMBL" id="AF408777">
    <property type="protein sequence ID" value="AAK97501.1"/>
    <property type="status" value="JOINED"/>
    <property type="molecule type" value="Genomic_DNA"/>
</dbReference>
<dbReference type="EMBL" id="AF408778">
    <property type="protein sequence ID" value="AAK97501.1"/>
    <property type="status" value="JOINED"/>
    <property type="molecule type" value="Genomic_DNA"/>
</dbReference>
<dbReference type="EMBL" id="AF408779">
    <property type="protein sequence ID" value="AAK97501.1"/>
    <property type="status" value="JOINED"/>
    <property type="molecule type" value="Genomic_DNA"/>
</dbReference>
<dbReference type="EMBL" id="AF408780">
    <property type="protein sequence ID" value="AAK97501.1"/>
    <property type="status" value="JOINED"/>
    <property type="molecule type" value="Genomic_DNA"/>
</dbReference>
<dbReference type="EMBL" id="AB051510">
    <property type="protein sequence ID" value="BAB21814.1"/>
    <property type="status" value="ALT_INIT"/>
    <property type="molecule type" value="mRNA"/>
</dbReference>
<dbReference type="EMBL" id="AK024774">
    <property type="protein sequence ID" value="BAB14996.1"/>
    <property type="molecule type" value="mRNA"/>
</dbReference>
<dbReference type="EMBL" id="AK299049">
    <property type="protein sequence ID" value="BAG61122.1"/>
    <property type="molecule type" value="mRNA"/>
</dbReference>
<dbReference type="EMBL" id="AC015641">
    <property type="status" value="NOT_ANNOTATED_CDS"/>
    <property type="molecule type" value="Genomic_DNA"/>
</dbReference>
<dbReference type="EMBL" id="AC019270">
    <property type="status" value="NOT_ANNOTATED_CDS"/>
    <property type="molecule type" value="Genomic_DNA"/>
</dbReference>
<dbReference type="EMBL" id="AC022844">
    <property type="status" value="NOT_ANNOTATED_CDS"/>
    <property type="molecule type" value="Genomic_DNA"/>
</dbReference>
<dbReference type="EMBL" id="AC106845">
    <property type="status" value="NOT_ANNOTATED_CDS"/>
    <property type="molecule type" value="Genomic_DNA"/>
</dbReference>
<dbReference type="EMBL" id="BC049842">
    <property type="protein sequence ID" value="AAH49842.1"/>
    <property type="molecule type" value="mRNA"/>
</dbReference>
<dbReference type="EMBL" id="BC054511">
    <property type="protein sequence ID" value="AAH54511.1"/>
    <property type="molecule type" value="mRNA"/>
</dbReference>
<dbReference type="EMBL" id="EU159199">
    <property type="protein sequence ID" value="ABX83661.1"/>
    <property type="molecule type" value="mRNA"/>
</dbReference>
<dbReference type="EMBL" id="EU159200">
    <property type="protein sequence ID" value="ABX83662.1"/>
    <property type="molecule type" value="mRNA"/>
</dbReference>
<dbReference type="CCDS" id="CCDS55201.1">
    <molecule id="Q96QB1-4"/>
</dbReference>
<dbReference type="CCDS" id="CCDS5989.1">
    <molecule id="Q96QB1-2"/>
</dbReference>
<dbReference type="CCDS" id="CCDS5990.1">
    <molecule id="Q96QB1-1"/>
</dbReference>
<dbReference type="CCDS" id="CCDS5991.2">
    <molecule id="Q96QB1-5"/>
</dbReference>
<dbReference type="CCDS" id="CCDS83253.1">
    <molecule id="Q96QB1-6"/>
</dbReference>
<dbReference type="RefSeq" id="NP_001157743.1">
    <molecule id="Q96QB1-4"/>
    <property type="nucleotide sequence ID" value="NM_001164271.2"/>
</dbReference>
<dbReference type="RefSeq" id="NP_001303597.1">
    <molecule id="Q96QB1-6"/>
    <property type="nucleotide sequence ID" value="NM_001316668.2"/>
</dbReference>
<dbReference type="RefSeq" id="NP_001335010.1">
    <molecule id="Q96QB1-2"/>
    <property type="nucleotide sequence ID" value="NM_001348081.2"/>
</dbReference>
<dbReference type="RefSeq" id="NP_001335011.1">
    <molecule id="Q96QB1-4"/>
    <property type="nucleotide sequence ID" value="NM_001348082.2"/>
</dbReference>
<dbReference type="RefSeq" id="NP_001335012.1">
    <molecule id="Q96QB1-4"/>
    <property type="nucleotide sequence ID" value="NM_001348083.1"/>
</dbReference>
<dbReference type="RefSeq" id="NP_001335013.1">
    <molecule id="Q96QB1-4"/>
    <property type="nucleotide sequence ID" value="NM_001348084.2"/>
</dbReference>
<dbReference type="RefSeq" id="NP_001400053.1">
    <molecule id="Q96QB1-2"/>
    <property type="nucleotide sequence ID" value="NM_001413124.1"/>
</dbReference>
<dbReference type="RefSeq" id="NP_001400055.1">
    <molecule id="Q96QB1-4"/>
    <property type="nucleotide sequence ID" value="NM_001413126.1"/>
</dbReference>
<dbReference type="RefSeq" id="NP_001400056.1">
    <molecule id="Q96QB1-4"/>
    <property type="nucleotide sequence ID" value="NM_001413127.1"/>
</dbReference>
<dbReference type="RefSeq" id="NP_001400057.1">
    <molecule id="Q96QB1-4"/>
    <property type="nucleotide sequence ID" value="NM_001413128.1"/>
</dbReference>
<dbReference type="RefSeq" id="NP_001400062.1">
    <molecule id="Q96QB1-4"/>
    <property type="nucleotide sequence ID" value="NM_001413133.1"/>
</dbReference>
<dbReference type="RefSeq" id="NP_001400067.1">
    <molecule id="Q96QB1-4"/>
    <property type="nucleotide sequence ID" value="NM_001413138.1"/>
</dbReference>
<dbReference type="RefSeq" id="NP_006085.2">
    <molecule id="Q96QB1-1"/>
    <property type="nucleotide sequence ID" value="NM_006094.4"/>
</dbReference>
<dbReference type="RefSeq" id="NP_079043.3">
    <molecule id="Q96QB1-5"/>
    <property type="nucleotide sequence ID" value="NM_024767.3"/>
</dbReference>
<dbReference type="RefSeq" id="NP_872584.2">
    <molecule id="Q96QB1-2"/>
    <property type="nucleotide sequence ID" value="NM_182643.3"/>
</dbReference>
<dbReference type="RefSeq" id="XP_005273431.1">
    <property type="nucleotide sequence ID" value="XM_005273374.1"/>
</dbReference>
<dbReference type="PDB" id="2DKY">
    <property type="method" value="NMR"/>
    <property type="chains" value="A=451-515"/>
</dbReference>
<dbReference type="PDB" id="2GYT">
    <property type="method" value="NMR"/>
    <property type="chains" value="A=451-513"/>
</dbReference>
<dbReference type="PDB" id="2KAP">
    <property type="method" value="NMR"/>
    <property type="chains" value="A=454-513"/>
</dbReference>
<dbReference type="PDB" id="2LOZ">
    <property type="method" value="NMR"/>
    <property type="chains" value="B=811-824"/>
</dbReference>
<dbReference type="PDB" id="3KUQ">
    <property type="method" value="X-ray"/>
    <property type="resolution" value="2.30 A"/>
    <property type="chains" value="A=1074-1283"/>
</dbReference>
<dbReference type="PDB" id="5FZT">
    <property type="method" value="X-ray"/>
    <property type="resolution" value="2.10 A"/>
    <property type="chains" value="B=904-926"/>
</dbReference>
<dbReference type="PDB" id="7TPB">
    <property type="method" value="X-ray"/>
    <property type="resolution" value="3.20 A"/>
    <property type="chains" value="B/D/F/H=1074-1283"/>
</dbReference>
<dbReference type="PDBsum" id="2DKY"/>
<dbReference type="PDBsum" id="2GYT"/>
<dbReference type="PDBsum" id="2KAP"/>
<dbReference type="PDBsum" id="2LOZ"/>
<dbReference type="PDBsum" id="3KUQ"/>
<dbReference type="PDBsum" id="5FZT"/>
<dbReference type="PDBsum" id="7TPB"/>
<dbReference type="BMRB" id="Q96QB1"/>
<dbReference type="SMR" id="Q96QB1"/>
<dbReference type="BioGRID" id="115667">
    <property type="interactions" value="61"/>
</dbReference>
<dbReference type="CORUM" id="Q96QB1"/>
<dbReference type="DIP" id="DIP-56928N"/>
<dbReference type="FunCoup" id="Q96QB1">
    <property type="interactions" value="909"/>
</dbReference>
<dbReference type="IntAct" id="Q96QB1">
    <property type="interactions" value="43"/>
</dbReference>
<dbReference type="MINT" id="Q96QB1"/>
<dbReference type="STRING" id="9606.ENSP00000276297"/>
<dbReference type="GlyGen" id="Q96QB1">
    <property type="glycosylation" value="2 sites, 1 O-linked glycan (1 site)"/>
</dbReference>
<dbReference type="iPTMnet" id="Q96QB1"/>
<dbReference type="PhosphoSitePlus" id="Q96QB1"/>
<dbReference type="BioMuta" id="DLC1"/>
<dbReference type="DMDM" id="313104315"/>
<dbReference type="jPOST" id="Q96QB1"/>
<dbReference type="MassIVE" id="Q96QB1"/>
<dbReference type="PaxDb" id="9606-ENSP00000276297"/>
<dbReference type="PeptideAtlas" id="Q96QB1"/>
<dbReference type="ProteomicsDB" id="19782"/>
<dbReference type="ProteomicsDB" id="20045"/>
<dbReference type="ProteomicsDB" id="20421"/>
<dbReference type="ProteomicsDB" id="77848">
    <molecule id="Q96QB1-2"/>
</dbReference>
<dbReference type="ProteomicsDB" id="77849">
    <molecule id="Q96QB1-1"/>
</dbReference>
<dbReference type="ProteomicsDB" id="77850">
    <molecule id="Q96QB1-3"/>
</dbReference>
<dbReference type="Antibodypedia" id="22182">
    <property type="antibodies" value="211 antibodies from 35 providers"/>
</dbReference>
<dbReference type="CPTC" id="Q96QB1">
    <property type="antibodies" value="3 antibodies"/>
</dbReference>
<dbReference type="DNASU" id="10395"/>
<dbReference type="Ensembl" id="ENST00000276297.9">
    <molecule id="Q96QB1-2"/>
    <property type="protein sequence ID" value="ENSP00000276297.4"/>
    <property type="gene ID" value="ENSG00000164741.15"/>
</dbReference>
<dbReference type="Ensembl" id="ENST00000316609.9">
    <molecule id="Q96QB1-3"/>
    <property type="protein sequence ID" value="ENSP00000321034.5"/>
    <property type="gene ID" value="ENSG00000164741.15"/>
</dbReference>
<dbReference type="Ensembl" id="ENST00000358919.6">
    <molecule id="Q96QB1-1"/>
    <property type="protein sequence ID" value="ENSP00000351797.2"/>
    <property type="gene ID" value="ENSG00000164741.15"/>
</dbReference>
<dbReference type="Ensembl" id="ENST00000511869.1">
    <molecule id="Q96QB1-5"/>
    <property type="protein sequence ID" value="ENSP00000425878.1"/>
    <property type="gene ID" value="ENSG00000164741.15"/>
</dbReference>
<dbReference type="Ensembl" id="ENST00000512044.6">
    <molecule id="Q96QB1-6"/>
    <property type="protein sequence ID" value="ENSP00000422595.2"/>
    <property type="gene ID" value="ENSG00000164741.15"/>
</dbReference>
<dbReference type="Ensembl" id="ENST00000520226.5">
    <molecule id="Q96QB1-4"/>
    <property type="protein sequence ID" value="ENSP00000428028.1"/>
    <property type="gene ID" value="ENSG00000164741.15"/>
</dbReference>
<dbReference type="GeneID" id="10395"/>
<dbReference type="KEGG" id="hsa:10395"/>
<dbReference type="MANE-Select" id="ENST00000276297.9">
    <property type="protein sequence ID" value="ENSP00000276297.4"/>
    <property type="RefSeq nucleotide sequence ID" value="NM_182643.3"/>
    <property type="RefSeq protein sequence ID" value="NP_872584.2"/>
</dbReference>
<dbReference type="UCSC" id="uc003wwk.2">
    <molecule id="Q96QB1-2"/>
    <property type="organism name" value="human"/>
</dbReference>
<dbReference type="AGR" id="HGNC:2897"/>
<dbReference type="CTD" id="10395"/>
<dbReference type="DisGeNET" id="10395"/>
<dbReference type="GeneCards" id="DLC1"/>
<dbReference type="HGNC" id="HGNC:2897">
    <property type="gene designation" value="DLC1"/>
</dbReference>
<dbReference type="HPA" id="ENSG00000164741">
    <property type="expression patterns" value="Low tissue specificity"/>
</dbReference>
<dbReference type="MalaCards" id="DLC1"/>
<dbReference type="MIM" id="604258">
    <property type="type" value="gene"/>
</dbReference>
<dbReference type="neXtProt" id="NX_Q96QB1"/>
<dbReference type="OpenTargets" id="ENSG00000164741"/>
<dbReference type="PharmGKB" id="PA27351"/>
<dbReference type="VEuPathDB" id="HostDB:ENSG00000164741"/>
<dbReference type="eggNOG" id="KOG2200">
    <property type="taxonomic scope" value="Eukaryota"/>
</dbReference>
<dbReference type="GeneTree" id="ENSGT00950000183061"/>
<dbReference type="HOGENOM" id="CLU_004367_1_0_1"/>
<dbReference type="InParanoid" id="Q96QB1"/>
<dbReference type="OMA" id="HRGNDAI"/>
<dbReference type="OrthoDB" id="10003330at2759"/>
<dbReference type="PAN-GO" id="Q96QB1">
    <property type="GO annotations" value="5 GO annotations based on evolutionary models"/>
</dbReference>
<dbReference type="PhylomeDB" id="Q96QB1"/>
<dbReference type="TreeFam" id="TF314044"/>
<dbReference type="PathwayCommons" id="Q96QB1"/>
<dbReference type="Reactome" id="R-HSA-8980692">
    <property type="pathway name" value="RHOA GTPase cycle"/>
</dbReference>
<dbReference type="Reactome" id="R-HSA-9013026">
    <property type="pathway name" value="RHOB GTPase cycle"/>
</dbReference>
<dbReference type="Reactome" id="R-HSA-9013106">
    <property type="pathway name" value="RHOC GTPase cycle"/>
</dbReference>
<dbReference type="Reactome" id="R-HSA-9013148">
    <property type="pathway name" value="CDC42 GTPase cycle"/>
</dbReference>
<dbReference type="Reactome" id="R-HSA-9013149">
    <property type="pathway name" value="RAC1 GTPase cycle"/>
</dbReference>
<dbReference type="Reactome" id="R-HSA-9013406">
    <property type="pathway name" value="RHOQ GTPase cycle"/>
</dbReference>
<dbReference type="SignaLink" id="Q96QB1"/>
<dbReference type="SIGNOR" id="Q96QB1"/>
<dbReference type="BioGRID-ORCS" id="10395">
    <property type="hits" value="12 hits in 1151 CRISPR screens"/>
</dbReference>
<dbReference type="ChiTaRS" id="DLC1">
    <property type="organism name" value="human"/>
</dbReference>
<dbReference type="EvolutionaryTrace" id="Q96QB1"/>
<dbReference type="GeneWiki" id="DLC1"/>
<dbReference type="GenomeRNAi" id="10395"/>
<dbReference type="Pharos" id="Q96QB1">
    <property type="development level" value="Tbio"/>
</dbReference>
<dbReference type="PRO" id="PR:Q96QB1"/>
<dbReference type="Proteomes" id="UP000005640">
    <property type="component" value="Chromosome 8"/>
</dbReference>
<dbReference type="RNAct" id="Q96QB1">
    <property type="molecule type" value="protein"/>
</dbReference>
<dbReference type="Bgee" id="ENSG00000164741">
    <property type="expression patterns" value="Expressed in adrenal tissue and 182 other cell types or tissues"/>
</dbReference>
<dbReference type="ExpressionAtlas" id="Q96QB1">
    <property type="expression patterns" value="baseline and differential"/>
</dbReference>
<dbReference type="GO" id="GO:0005901">
    <property type="term" value="C:caveola"/>
    <property type="evidence" value="ECO:0000314"/>
    <property type="project" value="UniProtKB"/>
</dbReference>
<dbReference type="GO" id="GO:0030864">
    <property type="term" value="C:cortical actin cytoskeleton"/>
    <property type="evidence" value="ECO:0000314"/>
    <property type="project" value="UniProtKB"/>
</dbReference>
<dbReference type="GO" id="GO:0005737">
    <property type="term" value="C:cytoplasm"/>
    <property type="evidence" value="ECO:0000314"/>
    <property type="project" value="UniProtKB"/>
</dbReference>
<dbReference type="GO" id="GO:0005829">
    <property type="term" value="C:cytosol"/>
    <property type="evidence" value="ECO:0000314"/>
    <property type="project" value="HPA"/>
</dbReference>
<dbReference type="GO" id="GO:0005783">
    <property type="term" value="C:endoplasmic reticulum"/>
    <property type="evidence" value="ECO:0000314"/>
    <property type="project" value="HPA"/>
</dbReference>
<dbReference type="GO" id="GO:0005925">
    <property type="term" value="C:focal adhesion"/>
    <property type="evidence" value="ECO:0000314"/>
    <property type="project" value="UniProtKB"/>
</dbReference>
<dbReference type="GO" id="GO:0043231">
    <property type="term" value="C:intracellular membrane-bounded organelle"/>
    <property type="evidence" value="ECO:0000314"/>
    <property type="project" value="HPA"/>
</dbReference>
<dbReference type="GO" id="GO:0045121">
    <property type="term" value="C:membrane raft"/>
    <property type="evidence" value="ECO:0000318"/>
    <property type="project" value="GO_Central"/>
</dbReference>
<dbReference type="GO" id="GO:0005634">
    <property type="term" value="C:nucleus"/>
    <property type="evidence" value="ECO:0000314"/>
    <property type="project" value="UniProtKB"/>
</dbReference>
<dbReference type="GO" id="GO:0032587">
    <property type="term" value="C:ruffle membrane"/>
    <property type="evidence" value="ECO:0000314"/>
    <property type="project" value="UniProtKB"/>
</dbReference>
<dbReference type="GO" id="GO:0005096">
    <property type="term" value="F:GTPase activator activity"/>
    <property type="evidence" value="ECO:0000315"/>
    <property type="project" value="UniProtKB"/>
</dbReference>
<dbReference type="GO" id="GO:0008289">
    <property type="term" value="F:lipid binding"/>
    <property type="evidence" value="ECO:0007669"/>
    <property type="project" value="InterPro"/>
</dbReference>
<dbReference type="GO" id="GO:0042169">
    <property type="term" value="F:SH2 domain binding"/>
    <property type="evidence" value="ECO:0000353"/>
    <property type="project" value="UniProtKB"/>
</dbReference>
<dbReference type="GO" id="GO:0030036">
    <property type="term" value="P:actin cytoskeleton organization"/>
    <property type="evidence" value="ECO:0000250"/>
    <property type="project" value="UniProtKB"/>
</dbReference>
<dbReference type="GO" id="GO:0048041">
    <property type="term" value="P:focal adhesion assembly"/>
    <property type="evidence" value="ECO:0000250"/>
    <property type="project" value="UniProtKB"/>
</dbReference>
<dbReference type="GO" id="GO:0030900">
    <property type="term" value="P:forebrain development"/>
    <property type="evidence" value="ECO:0000250"/>
    <property type="project" value="UniProtKB"/>
</dbReference>
<dbReference type="GO" id="GO:0003007">
    <property type="term" value="P:heart morphogenesis"/>
    <property type="evidence" value="ECO:0000250"/>
    <property type="project" value="UniProtKB"/>
</dbReference>
<dbReference type="GO" id="GO:0021575">
    <property type="term" value="P:hindbrain morphogenesis"/>
    <property type="evidence" value="ECO:0000250"/>
    <property type="project" value="UniProtKB"/>
</dbReference>
<dbReference type="GO" id="GO:0035556">
    <property type="term" value="P:intracellular signal transduction"/>
    <property type="evidence" value="ECO:0000314"/>
    <property type="project" value="UniProtKB"/>
</dbReference>
<dbReference type="GO" id="GO:0030336">
    <property type="term" value="P:negative regulation of cell migration"/>
    <property type="evidence" value="ECO:0000314"/>
    <property type="project" value="UniProtKB"/>
</dbReference>
<dbReference type="GO" id="GO:0008285">
    <property type="term" value="P:negative regulation of cell population proliferation"/>
    <property type="evidence" value="ECO:0000314"/>
    <property type="project" value="UniProtKB"/>
</dbReference>
<dbReference type="GO" id="GO:0051895">
    <property type="term" value="P:negative regulation of focal adhesion assembly"/>
    <property type="evidence" value="ECO:0000314"/>
    <property type="project" value="UniProtKB"/>
</dbReference>
<dbReference type="GO" id="GO:0035024">
    <property type="term" value="P:negative regulation of Rho protein signal transduction"/>
    <property type="evidence" value="ECO:0000315"/>
    <property type="project" value="UniProtKB"/>
</dbReference>
<dbReference type="GO" id="GO:0051497">
    <property type="term" value="P:negative regulation of stress fiber assembly"/>
    <property type="evidence" value="ECO:0000314"/>
    <property type="project" value="UniProtKB"/>
</dbReference>
<dbReference type="GO" id="GO:0001843">
    <property type="term" value="P:neural tube closure"/>
    <property type="evidence" value="ECO:0000250"/>
    <property type="project" value="UniProtKB"/>
</dbReference>
<dbReference type="GO" id="GO:1900119">
    <property type="term" value="P:positive regulation of execution phase of apoptosis"/>
    <property type="evidence" value="ECO:0000314"/>
    <property type="project" value="UniProtKB"/>
</dbReference>
<dbReference type="GO" id="GO:0035023">
    <property type="term" value="P:regulation of Rho protein signal transduction"/>
    <property type="evidence" value="ECO:0000318"/>
    <property type="project" value="GO_Central"/>
</dbReference>
<dbReference type="GO" id="GO:0051056">
    <property type="term" value="P:regulation of small GTPase mediated signal transduction"/>
    <property type="evidence" value="ECO:0000304"/>
    <property type="project" value="Reactome"/>
</dbReference>
<dbReference type="CDD" id="cd04375">
    <property type="entry name" value="RhoGAP_DLC1"/>
    <property type="match status" value="1"/>
</dbReference>
<dbReference type="CDD" id="cd09591">
    <property type="entry name" value="SAM_DLC1"/>
    <property type="match status" value="1"/>
</dbReference>
<dbReference type="CDD" id="cd08908">
    <property type="entry name" value="START_STARD12-like"/>
    <property type="match status" value="1"/>
</dbReference>
<dbReference type="FunFam" id="3.30.530.20:FF:000010">
    <property type="entry name" value="rho GTPase-activating protein 7 isoform X1"/>
    <property type="match status" value="1"/>
</dbReference>
<dbReference type="FunFam" id="1.10.555.10:FF:000007">
    <property type="entry name" value="rho GTPase-activating protein 7 isoform X2"/>
    <property type="match status" value="1"/>
</dbReference>
<dbReference type="FunFam" id="1.10.287.2070:FF:000001">
    <property type="entry name" value="StAR-related lipid transfer domain-containing 13"/>
    <property type="match status" value="1"/>
</dbReference>
<dbReference type="Gene3D" id="1.10.287.2070">
    <property type="match status" value="1"/>
</dbReference>
<dbReference type="Gene3D" id="3.30.530.20">
    <property type="match status" value="1"/>
</dbReference>
<dbReference type="Gene3D" id="1.10.555.10">
    <property type="entry name" value="Rho GTPase activation protein"/>
    <property type="match status" value="1"/>
</dbReference>
<dbReference type="IDEAL" id="IID00677"/>
<dbReference type="InterPro" id="IPR008936">
    <property type="entry name" value="Rho_GTPase_activation_prot"/>
</dbReference>
<dbReference type="InterPro" id="IPR000198">
    <property type="entry name" value="RhoGAP_dom"/>
</dbReference>
<dbReference type="InterPro" id="IPR001660">
    <property type="entry name" value="SAM"/>
</dbReference>
<dbReference type="InterPro" id="IPR013761">
    <property type="entry name" value="SAM/pointed_sf"/>
</dbReference>
<dbReference type="InterPro" id="IPR023393">
    <property type="entry name" value="START-like_dom_sf"/>
</dbReference>
<dbReference type="InterPro" id="IPR002913">
    <property type="entry name" value="START_lipid-bd_dom"/>
</dbReference>
<dbReference type="PANTHER" id="PTHR12659:SF2">
    <property type="entry name" value="RHO GTPASE-ACTIVATING PROTEIN 7"/>
    <property type="match status" value="1"/>
</dbReference>
<dbReference type="PANTHER" id="PTHR12659">
    <property type="entry name" value="RHO-TYPE GTPASE ACTIVATING PROTEIN"/>
    <property type="match status" value="1"/>
</dbReference>
<dbReference type="Pfam" id="PF00620">
    <property type="entry name" value="RhoGAP"/>
    <property type="match status" value="1"/>
</dbReference>
<dbReference type="Pfam" id="PF07647">
    <property type="entry name" value="SAM_2"/>
    <property type="match status" value="1"/>
</dbReference>
<dbReference type="Pfam" id="PF01852">
    <property type="entry name" value="START"/>
    <property type="match status" value="1"/>
</dbReference>
<dbReference type="SMART" id="SM00324">
    <property type="entry name" value="RhoGAP"/>
    <property type="match status" value="1"/>
</dbReference>
<dbReference type="SMART" id="SM00234">
    <property type="entry name" value="START"/>
    <property type="match status" value="1"/>
</dbReference>
<dbReference type="SUPFAM" id="SSF55961">
    <property type="entry name" value="Bet v1-like"/>
    <property type="match status" value="1"/>
</dbReference>
<dbReference type="SUPFAM" id="SSF48350">
    <property type="entry name" value="GTPase activation domain, GAP"/>
    <property type="match status" value="1"/>
</dbReference>
<dbReference type="SUPFAM" id="SSF47769">
    <property type="entry name" value="SAM/Pointed domain"/>
    <property type="match status" value="1"/>
</dbReference>
<dbReference type="PROSITE" id="PS50238">
    <property type="entry name" value="RHOGAP"/>
    <property type="match status" value="1"/>
</dbReference>
<dbReference type="PROSITE" id="PS50848">
    <property type="entry name" value="START"/>
    <property type="match status" value="1"/>
</dbReference>
<accession>Q96QB1</accession>
<accession>B4DR10</accession>
<accession>B8PTI0</accession>
<accession>E9PDZ8</accession>
<accession>E9PF76</accession>
<accession>E9PGY9</accession>
<accession>O14868</accession>
<accession>O43199</accession>
<accession>Q7Z5R8</accession>
<accession>Q86UC6</accession>
<accession>Q9C0E0</accession>
<accession>Q9H7A2</accession>
<keyword id="KW-0002">3D-structure</keyword>
<keyword id="KW-0877">Alternative promoter usage</keyword>
<keyword id="KW-0025">Alternative splicing</keyword>
<keyword id="KW-0965">Cell junction</keyword>
<keyword id="KW-0963">Cytoplasm</keyword>
<keyword id="KW-0343">GTPase activation</keyword>
<keyword id="KW-0472">Membrane</keyword>
<keyword id="KW-0597">Phosphoprotein</keyword>
<keyword id="KW-1267">Proteomics identification</keyword>
<keyword id="KW-1185">Reference proteome</keyword>
<keyword id="KW-0043">Tumor suppressor</keyword>
<evidence type="ECO:0000250" key="1">
    <source>
        <dbReference type="UniProtKB" id="Q63744"/>
    </source>
</evidence>
<evidence type="ECO:0000255" key="2">
    <source>
        <dbReference type="PROSITE-ProRule" id="PRU00172"/>
    </source>
</evidence>
<evidence type="ECO:0000255" key="3">
    <source>
        <dbReference type="PROSITE-ProRule" id="PRU00197"/>
    </source>
</evidence>
<evidence type="ECO:0000256" key="4">
    <source>
        <dbReference type="SAM" id="MobiDB-lite"/>
    </source>
</evidence>
<evidence type="ECO:0000269" key="5">
    <source>
    </source>
</evidence>
<evidence type="ECO:0000269" key="6">
    <source>
    </source>
</evidence>
<evidence type="ECO:0000269" key="7">
    <source>
    </source>
</evidence>
<evidence type="ECO:0000269" key="8">
    <source>
    </source>
</evidence>
<evidence type="ECO:0000269" key="9">
    <source>
    </source>
</evidence>
<evidence type="ECO:0000269" key="10">
    <source>
    </source>
</evidence>
<evidence type="ECO:0000269" key="11">
    <source>
    </source>
</evidence>
<evidence type="ECO:0000269" key="12">
    <source>
    </source>
</evidence>
<evidence type="ECO:0000269" key="13">
    <source>
    </source>
</evidence>
<evidence type="ECO:0000269" key="14">
    <source>
    </source>
</evidence>
<evidence type="ECO:0000269" key="15">
    <source>
    </source>
</evidence>
<evidence type="ECO:0000269" key="16">
    <source>
    </source>
</evidence>
<evidence type="ECO:0000269" key="17">
    <source>
    </source>
</evidence>
<evidence type="ECO:0000269" key="18">
    <source>
    </source>
</evidence>
<evidence type="ECO:0000269" key="19">
    <source ref="2"/>
</evidence>
<evidence type="ECO:0000269" key="20">
    <source ref="3"/>
</evidence>
<evidence type="ECO:0000303" key="21">
    <source>
    </source>
</evidence>
<evidence type="ECO:0000303" key="22">
    <source>
    </source>
</evidence>
<evidence type="ECO:0000303" key="23">
    <source>
    </source>
</evidence>
<evidence type="ECO:0000303" key="24">
    <source>
    </source>
</evidence>
<evidence type="ECO:0000303" key="25">
    <source ref="2"/>
</evidence>
<evidence type="ECO:0000305" key="26"/>
<evidence type="ECO:0007744" key="27">
    <source>
    </source>
</evidence>
<evidence type="ECO:0007829" key="28">
    <source>
        <dbReference type="PDB" id="2DKY"/>
    </source>
</evidence>
<evidence type="ECO:0007829" key="29">
    <source>
        <dbReference type="PDB" id="2KAP"/>
    </source>
</evidence>
<evidence type="ECO:0007829" key="30">
    <source>
        <dbReference type="PDB" id="3KUQ"/>
    </source>
</evidence>
<evidence type="ECO:0007829" key="31">
    <source>
        <dbReference type="PDB" id="5FZT"/>
    </source>
</evidence>
<name>RHG07_HUMAN</name>
<organism>
    <name type="scientific">Homo sapiens</name>
    <name type="common">Human</name>
    <dbReference type="NCBI Taxonomy" id="9606"/>
    <lineage>
        <taxon>Eukaryota</taxon>
        <taxon>Metazoa</taxon>
        <taxon>Chordata</taxon>
        <taxon>Craniata</taxon>
        <taxon>Vertebrata</taxon>
        <taxon>Euteleostomi</taxon>
        <taxon>Mammalia</taxon>
        <taxon>Eutheria</taxon>
        <taxon>Euarchontoglires</taxon>
        <taxon>Primates</taxon>
        <taxon>Haplorrhini</taxon>
        <taxon>Catarrhini</taxon>
        <taxon>Hominidae</taxon>
        <taxon>Homo</taxon>
    </lineage>
</organism>
<reference key="1">
    <citation type="journal article" date="1998" name="Cancer Res.">
        <title>Cloning, characterization, and chromosomal localization of a gene frequently deleted in human liver cancer (DLC-1) homologous to rat RhoGAP.</title>
        <authorList>
            <person name="Yuan B.Z."/>
            <person name="Miller M.J."/>
            <person name="Keck C.L."/>
            <person name="Zimonjic D.B."/>
            <person name="Thorgeirsson S.S."/>
            <person name="Popescu N.C."/>
        </authorList>
    </citation>
    <scope>NUCLEOTIDE SEQUENCE [MRNA] (ISOFORM 1)</scope>
    <scope>VARIANTS SER-712; VAL-1199 AND CYS-1209</scope>
</reference>
<reference key="2">
    <citation type="submission" date="1997-09" db="EMBL/GenBank/DDBJ databases">
        <title>Cloning and molecular characterization of the human ortholog of the rat dual regulator p122RhoGAP.</title>
        <authorList>
            <person name="Wei M.-H."/>
            <person name="Pack S."/>
            <person name="Ivanov S."/>
            <person name="Lerman M.I."/>
        </authorList>
    </citation>
    <scope>NUCLEOTIDE SEQUENCE [MRNA] (ISOFORM 1)</scope>
    <scope>VARIANT MET-791</scope>
    <source>
        <tissue>Lung</tissue>
    </source>
</reference>
<reference key="3">
    <citation type="submission" date="2001-08" db="EMBL/GenBank/DDBJ databases">
        <title>Identification of HP/DLC1 exon and introns.</title>
        <authorList>
            <person name="Jeong S.-J."/>
            <person name="Dimtchev A."/>
            <person name="Lerman M."/>
            <person name="Dritschilo A."/>
            <person name="Jung M."/>
        </authorList>
    </citation>
    <scope>NUCLEOTIDE SEQUENCE [GENOMIC DNA] (ISOFORM 1)</scope>
    <scope>VARIANT MET-791</scope>
</reference>
<reference key="4">
    <citation type="journal article" date="2000" name="DNA Res.">
        <title>Prediction of the coding sequences of unidentified human genes. XIX. The complete sequences of 100 new cDNA clones from brain which code for large proteins in vitro.</title>
        <authorList>
            <person name="Nagase T."/>
            <person name="Kikuno R."/>
            <person name="Hattori A."/>
            <person name="Kondo Y."/>
            <person name="Okumura K."/>
            <person name="Ohara O."/>
        </authorList>
    </citation>
    <scope>NUCLEOTIDE SEQUENCE [LARGE SCALE MRNA] (ISOFORM 2)</scope>
    <scope>VARIANTS HIS-254; ASP-255 AND ILE-260 AND MET-791</scope>
    <source>
        <tissue>Brain</tissue>
    </source>
</reference>
<reference key="5">
    <citation type="journal article" date="2004" name="Nat. Genet.">
        <title>Complete sequencing and characterization of 21,243 full-length human cDNAs.</title>
        <authorList>
            <person name="Ota T."/>
            <person name="Suzuki Y."/>
            <person name="Nishikawa T."/>
            <person name="Otsuki T."/>
            <person name="Sugiyama T."/>
            <person name="Irie R."/>
            <person name="Wakamatsu A."/>
            <person name="Hayashi K."/>
            <person name="Sato H."/>
            <person name="Nagai K."/>
            <person name="Kimura K."/>
            <person name="Makita H."/>
            <person name="Sekine M."/>
            <person name="Obayashi M."/>
            <person name="Nishi T."/>
            <person name="Shibahara T."/>
            <person name="Tanaka T."/>
            <person name="Ishii S."/>
            <person name="Yamamoto J."/>
            <person name="Saito K."/>
            <person name="Kawai Y."/>
            <person name="Isono Y."/>
            <person name="Nakamura Y."/>
            <person name="Nagahari K."/>
            <person name="Murakami K."/>
            <person name="Yasuda T."/>
            <person name="Iwayanagi T."/>
            <person name="Wagatsuma M."/>
            <person name="Shiratori A."/>
            <person name="Sudo H."/>
            <person name="Hosoiri T."/>
            <person name="Kaku Y."/>
            <person name="Kodaira H."/>
            <person name="Kondo H."/>
            <person name="Sugawara M."/>
            <person name="Takahashi M."/>
            <person name="Kanda K."/>
            <person name="Yokoi T."/>
            <person name="Furuya T."/>
            <person name="Kikkawa E."/>
            <person name="Omura Y."/>
            <person name="Abe K."/>
            <person name="Kamihara K."/>
            <person name="Katsuta N."/>
            <person name="Sato K."/>
            <person name="Tanikawa M."/>
            <person name="Yamazaki M."/>
            <person name="Ninomiya K."/>
            <person name="Ishibashi T."/>
            <person name="Yamashita H."/>
            <person name="Murakawa K."/>
            <person name="Fujimori K."/>
            <person name="Tanai H."/>
            <person name="Kimata M."/>
            <person name="Watanabe M."/>
            <person name="Hiraoka S."/>
            <person name="Chiba Y."/>
            <person name="Ishida S."/>
            <person name="Ono Y."/>
            <person name="Takiguchi S."/>
            <person name="Watanabe S."/>
            <person name="Yosida M."/>
            <person name="Hotuta T."/>
            <person name="Kusano J."/>
            <person name="Kanehori K."/>
            <person name="Takahashi-Fujii A."/>
            <person name="Hara H."/>
            <person name="Tanase T.-O."/>
            <person name="Nomura Y."/>
            <person name="Togiya S."/>
            <person name="Komai F."/>
            <person name="Hara R."/>
            <person name="Takeuchi K."/>
            <person name="Arita M."/>
            <person name="Imose N."/>
            <person name="Musashino K."/>
            <person name="Yuuki H."/>
            <person name="Oshima A."/>
            <person name="Sasaki N."/>
            <person name="Aotsuka S."/>
            <person name="Yoshikawa Y."/>
            <person name="Matsunawa H."/>
            <person name="Ichihara T."/>
            <person name="Shiohata N."/>
            <person name="Sano S."/>
            <person name="Moriya S."/>
            <person name="Momiyama H."/>
            <person name="Satoh N."/>
            <person name="Takami S."/>
            <person name="Terashima Y."/>
            <person name="Suzuki O."/>
            <person name="Nakagawa S."/>
            <person name="Senoh A."/>
            <person name="Mizoguchi H."/>
            <person name="Goto Y."/>
            <person name="Shimizu F."/>
            <person name="Wakebe H."/>
            <person name="Hishigaki H."/>
            <person name="Watanabe T."/>
            <person name="Sugiyama A."/>
            <person name="Takemoto M."/>
            <person name="Kawakami B."/>
            <person name="Yamazaki M."/>
            <person name="Watanabe K."/>
            <person name="Kumagai A."/>
            <person name="Itakura S."/>
            <person name="Fukuzumi Y."/>
            <person name="Fujimori Y."/>
            <person name="Komiyama M."/>
            <person name="Tashiro H."/>
            <person name="Tanigami A."/>
            <person name="Fujiwara T."/>
            <person name="Ono T."/>
            <person name="Yamada K."/>
            <person name="Fujii Y."/>
            <person name="Ozaki K."/>
            <person name="Hirao M."/>
            <person name="Ohmori Y."/>
            <person name="Kawabata A."/>
            <person name="Hikiji T."/>
            <person name="Kobatake N."/>
            <person name="Inagaki H."/>
            <person name="Ikema Y."/>
            <person name="Okamoto S."/>
            <person name="Okitani R."/>
            <person name="Kawakami T."/>
            <person name="Noguchi S."/>
            <person name="Itoh T."/>
            <person name="Shigeta K."/>
            <person name="Senba T."/>
            <person name="Matsumura K."/>
            <person name="Nakajima Y."/>
            <person name="Mizuno T."/>
            <person name="Morinaga M."/>
            <person name="Sasaki M."/>
            <person name="Togashi T."/>
            <person name="Oyama M."/>
            <person name="Hata H."/>
            <person name="Watanabe M."/>
            <person name="Komatsu T."/>
            <person name="Mizushima-Sugano J."/>
            <person name="Satoh T."/>
            <person name="Shirai Y."/>
            <person name="Takahashi Y."/>
            <person name="Nakagawa K."/>
            <person name="Okumura K."/>
            <person name="Nagase T."/>
            <person name="Nomura N."/>
            <person name="Kikuchi H."/>
            <person name="Masuho Y."/>
            <person name="Yamashita R."/>
            <person name="Nakai K."/>
            <person name="Yada T."/>
            <person name="Nakamura Y."/>
            <person name="Ohara O."/>
            <person name="Isogai T."/>
            <person name="Sugano S."/>
        </authorList>
    </citation>
    <scope>NUCLEOTIDE SEQUENCE [LARGE SCALE MRNA] (ISOFORMS 3 AND 4)</scope>
    <scope>VARIANTS HIS-254; ASP-255; ILE-260 AND MET-791</scope>
    <source>
        <tissue>Smooth muscle</tissue>
    </source>
</reference>
<reference key="6">
    <citation type="journal article" date="2006" name="Nature">
        <title>DNA sequence and analysis of human chromosome 8.</title>
        <authorList>
            <person name="Nusbaum C."/>
            <person name="Mikkelsen T.S."/>
            <person name="Zody M.C."/>
            <person name="Asakawa S."/>
            <person name="Taudien S."/>
            <person name="Garber M."/>
            <person name="Kodira C.D."/>
            <person name="Schueler M.G."/>
            <person name="Shimizu A."/>
            <person name="Whittaker C.A."/>
            <person name="Chang J.L."/>
            <person name="Cuomo C.A."/>
            <person name="Dewar K."/>
            <person name="FitzGerald M.G."/>
            <person name="Yang X."/>
            <person name="Allen N.R."/>
            <person name="Anderson S."/>
            <person name="Asakawa T."/>
            <person name="Blechschmidt K."/>
            <person name="Bloom T."/>
            <person name="Borowsky M.L."/>
            <person name="Butler J."/>
            <person name="Cook A."/>
            <person name="Corum B."/>
            <person name="DeArellano K."/>
            <person name="DeCaprio D."/>
            <person name="Dooley K.T."/>
            <person name="Dorris L. III"/>
            <person name="Engels R."/>
            <person name="Gloeckner G."/>
            <person name="Hafez N."/>
            <person name="Hagopian D.S."/>
            <person name="Hall J.L."/>
            <person name="Ishikawa S.K."/>
            <person name="Jaffe D.B."/>
            <person name="Kamat A."/>
            <person name="Kudoh J."/>
            <person name="Lehmann R."/>
            <person name="Lokitsang T."/>
            <person name="Macdonald P."/>
            <person name="Major J.E."/>
            <person name="Matthews C.D."/>
            <person name="Mauceli E."/>
            <person name="Menzel U."/>
            <person name="Mihalev A.H."/>
            <person name="Minoshima S."/>
            <person name="Murayama Y."/>
            <person name="Naylor J.W."/>
            <person name="Nicol R."/>
            <person name="Nguyen C."/>
            <person name="O'Leary S.B."/>
            <person name="O'Neill K."/>
            <person name="Parker S.C.J."/>
            <person name="Polley A."/>
            <person name="Raymond C.K."/>
            <person name="Reichwald K."/>
            <person name="Rodriguez J."/>
            <person name="Sasaki T."/>
            <person name="Schilhabel M."/>
            <person name="Siddiqui R."/>
            <person name="Smith C.L."/>
            <person name="Sneddon T.P."/>
            <person name="Talamas J.A."/>
            <person name="Tenzin P."/>
            <person name="Topham K."/>
            <person name="Venkataraman V."/>
            <person name="Wen G."/>
            <person name="Yamazaki S."/>
            <person name="Young S.K."/>
            <person name="Zeng Q."/>
            <person name="Zimmer A.R."/>
            <person name="Rosenthal A."/>
            <person name="Birren B.W."/>
            <person name="Platzer M."/>
            <person name="Shimizu N."/>
            <person name="Lander E.S."/>
        </authorList>
    </citation>
    <scope>NUCLEOTIDE SEQUENCE [LARGE SCALE GENOMIC DNA]</scope>
</reference>
<reference key="7">
    <citation type="journal article" date="2004" name="Genome Res.">
        <title>The status, quality, and expansion of the NIH full-length cDNA project: the Mammalian Gene Collection (MGC).</title>
        <authorList>
            <consortium name="The MGC Project Team"/>
        </authorList>
    </citation>
    <scope>NUCLEOTIDE SEQUENCE [LARGE SCALE MRNA] (ISOFORMS 2 AND 5)</scope>
    <scope>VARIANT ASP-255</scope>
    <source>
        <tissue>Brain</tissue>
        <tissue>Lung</tissue>
    </source>
</reference>
<reference key="8">
    <citation type="journal article" date="2011" name="Oncogene">
        <title>A novel isoform of the 8p22 tumor suppressor gene DLC1 suppresses tumor growth and is frequently silenced in multiple common tumors.</title>
        <authorList>
            <person name="Low J.S."/>
            <person name="Tao Q."/>
            <person name="Ng K.M."/>
            <person name="Goh H.K."/>
            <person name="Shu X.S."/>
            <person name="Woo W.L."/>
            <person name="Ambinder R.F."/>
            <person name="Srivastava G."/>
            <person name="Shamay M."/>
            <person name="Chan A.T."/>
            <person name="Popescu N.C."/>
            <person name="Hsieh W.S."/>
        </authorList>
    </citation>
    <scope>NUCLEOTIDE SEQUENCE [MRNA] OF 1-50 (ISOFORM 6)</scope>
    <scope>ALTERNATIVE PROMOTER USAGE</scope>
    <source>
        <tissue>Liver</tissue>
    </source>
</reference>
<reference key="9">
    <citation type="journal article" date="2007" name="J. Cell Biol.">
        <title>The phosphotyrosine-independent interaction of DLC-1 and the SH2 domain of cten regulates focal adhesion localization and growth suppression activity of DLC-1.</title>
        <authorList>
            <person name="Liao Y.C."/>
            <person name="Si L."/>
            <person name="deVere White R.W."/>
            <person name="Lo S.H."/>
        </authorList>
    </citation>
    <scope>INTERACTION WITH TNS4</scope>
    <scope>SUBCELLULAR LOCATION</scope>
    <scope>MUTAGENESIS OF SER-877 AND TYR-879</scope>
</reference>
<reference key="10">
    <citation type="journal article" date="2008" name="J. Biol. Chem.">
        <title>Effects of structure of Rho GTPase-activating protein DLC-1 on cell morphology and migration.</title>
        <authorList>
            <person name="Kim T.Y."/>
            <person name="Healy K.D."/>
            <person name="Der C.J."/>
            <person name="Sciaky N."/>
            <person name="Bang Y.J."/>
            <person name="Juliano R.L."/>
        </authorList>
    </citation>
    <scope>FUNCTION</scope>
    <scope>DOMAIN SAM</scope>
    <scope>SUBCELLULAR LOCATION</scope>
    <scope>MUTAGENESIS OF TYR-879</scope>
</reference>
<reference key="11">
    <citation type="journal article" date="2009" name="Genes Cells">
        <title>Focal adhesion-localization of START-GAP1/DLC1 is essential for cell motility and morphology.</title>
        <authorList>
            <person name="Kawai K."/>
            <person name="Iwamae Y."/>
            <person name="Yamaga M."/>
            <person name="Kiyota M."/>
            <person name="Ishii H."/>
            <person name="Hirata H."/>
            <person name="Homma Y."/>
            <person name="Yagisawa H."/>
        </authorList>
    </citation>
    <scope>FUNCTION</scope>
    <scope>SUBCELLULAR LOCATION</scope>
    <scope>FOCAL ADHESION TARGETING</scope>
</reference>
<reference key="12">
    <citation type="journal article" date="2009" name="J. Biol. Chem.">
        <title>Tensin1 requires protein phosphatase-1alpha in addition to RhoGAP DLC-1 to control cell polarization, migration, and invasion.</title>
        <authorList>
            <person name="Hall E.H."/>
            <person name="Daugherty A.E."/>
            <person name="Choi C.K."/>
            <person name="Horwitz A.F."/>
            <person name="Brautigan D.L."/>
        </authorList>
    </citation>
    <scope>INTERACTION WITH TNS1</scope>
</reference>
<reference key="13">
    <citation type="journal article" date="2009" name="Mol. Biol. Cell">
        <title>DLC1 activation requires lipid interaction through a polybasic region preceding the RhoGAP domain.</title>
        <authorList>
            <person name="Erlmann P."/>
            <person name="Schmid S."/>
            <person name="Horenkamp F.A."/>
            <person name="Geyer M."/>
            <person name="Pomorski T.G."/>
            <person name="Olayioye M.A."/>
        </authorList>
    </citation>
    <scope>FUNCTION</scope>
    <scope>LIPID-BINDING REGION</scope>
</reference>
<reference key="14">
    <citation type="journal article" date="2010" name="Mol. Cell. Proteomics">
        <title>Comprehensive analysis of phosphorylation sites in Tensin1 reveals regulation by p38MAPK.</title>
        <authorList>
            <person name="Hall E.H."/>
            <person name="Balsbaugh J.L."/>
            <person name="Rose K.L."/>
            <person name="Shabanowitz J."/>
            <person name="Hunt D.F."/>
            <person name="Brautigan D.L."/>
        </authorList>
    </citation>
    <scope>INTERACTION WITH TNS1</scope>
</reference>
<reference key="15">
    <citation type="journal article" date="2013" name="J. Proteome Res.">
        <title>Toward a comprehensive characterization of a human cancer cell phosphoproteome.</title>
        <authorList>
            <person name="Zhou H."/>
            <person name="Di Palma S."/>
            <person name="Preisinger C."/>
            <person name="Peng M."/>
            <person name="Polat A.N."/>
            <person name="Heck A.J."/>
            <person name="Mohammed S."/>
        </authorList>
    </citation>
    <scope>IDENTIFICATION BY MASS SPECTROMETRY [LARGE SCALE ANALYSIS]</scope>
    <source>
        <tissue>Erythroleukemia</tissue>
    </source>
</reference>
<reference key="16">
    <citation type="journal article" date="2014" name="J. Proteomics">
        <title>An enzyme assisted RP-RPLC approach for in-depth analysis of human liver phosphoproteome.</title>
        <authorList>
            <person name="Bian Y."/>
            <person name="Song C."/>
            <person name="Cheng K."/>
            <person name="Dong M."/>
            <person name="Wang F."/>
            <person name="Huang J."/>
            <person name="Sun D."/>
            <person name="Wang L."/>
            <person name="Ye M."/>
            <person name="Zou H."/>
        </authorList>
    </citation>
    <scope>PHOSPHORYLATION [LARGE SCALE ANALYSIS] AT SER-523; SER-526 AND SER-757</scope>
    <scope>IDENTIFICATION BY MASS SPECTROMETRY [LARGE SCALE ANALYSIS]</scope>
    <source>
        <tissue>Liver</tissue>
    </source>
</reference>
<reference key="17">
    <citation type="journal article" date="2015" name="Biochim. Biophys. Acta">
        <title>Tensin1 positively regulates RhoA activity through its interaction with DLC1.</title>
        <authorList>
            <person name="Shih Y.P."/>
            <person name="Sun P."/>
            <person name="Wang A."/>
            <person name="Lo S.H."/>
        </authorList>
    </citation>
    <scope>INTERACTION WITH TNS1</scope>
</reference>
<reference key="18">
    <citation type="journal article" date="2015" name="Nat. Commun.">
        <title>A phosphorylation switch controls the spatiotemporal activation of Rho GTPases in directional cell migration.</title>
        <authorList>
            <person name="Cao X."/>
            <person name="Kaneko T."/>
            <person name="Li J.S."/>
            <person name="Liu A.D."/>
            <person name="Voss C."/>
            <person name="Li S.S."/>
        </authorList>
    </citation>
    <scope>FUNCTION</scope>
    <scope>INTERACTION WITH TNS3 AND PTEN</scope>
</reference>
<reference key="19">
    <citation type="submission" date="2007-04" db="PDB data bank">
        <title>Solution structure of the SAM-domain of rho-GTPase-activating protein 7.</title>
        <authorList>
            <consortium name="RIKEN structural genomics initiative (RSGI)"/>
        </authorList>
    </citation>
    <scope>STRUCTURE BY NMR OF 438-518</scope>
</reference>
<reference key="20">
    <citation type="journal article" date="2009" name="Biochemistry">
        <title>Characterization of DLC1-SAM equilibrium unfolding at the amino acid residue level.</title>
        <authorList>
            <person name="Yang S."/>
            <person name="Noble C.G."/>
            <person name="Yang D."/>
        </authorList>
    </citation>
    <scope>STRUCTURE BY NMR OF 454-513</scope>
</reference>
<reference key="21">
    <citation type="journal article" date="2009" name="J. Cell Sci.">
        <title>The SAM domain of the RhoGAP DLC1 binds EF1A1 to regulate cell migration.</title>
        <authorList>
            <person name="Zhong D."/>
            <person name="Zhang J."/>
            <person name="Yang S."/>
            <person name="Soh U.J."/>
            <person name="Buschdorf J.P."/>
            <person name="Zhou Y.T."/>
            <person name="Yang D."/>
            <person name="Low B.C."/>
        </authorList>
    </citation>
    <scope>STRUCTURE BY NMR OF 451-513</scope>
    <scope>MUTAGENESIS OF PHE-475; LEU-476 AND ARG-1114</scope>
    <scope>INTERACTION WITH EF1A1</scope>
    <scope>SUBCELLULAR LOCATION</scope>
</reference>
<reference key="22">
    <citation type="journal article" date="2000" name="Hum. Mutat.">
        <title>Sequence variants of DLC1 in colorectal and ovarian tumours.</title>
        <authorList>
            <person name="Wilson P.J."/>
            <person name="McGlinn E."/>
            <person name="Marsh A."/>
            <person name="Evans T."/>
            <person name="Arnold J."/>
            <person name="Wright K."/>
            <person name="Biden K."/>
            <person name="Young J."/>
            <person name="Wainwright B."/>
            <person name="Wicking C."/>
            <person name="Chenevix-Trench G."/>
        </authorList>
    </citation>
    <scope>VARIANTS SER-712; MET-791; ALA-959; GLN-998; ALA-1025; VAL-1199 AND CYS-1209</scope>
</reference>
<comment type="function">
    <text evidence="10 12 13 16">Functions as a GTPase-activating protein for the small GTPases RHOA, RHOB, RHOC and CDC42, terminating their downstream signaling. This induces morphological changes and detachment through cytoskeletal reorganization, playing a critical role in biological processes such as cell migration and proliferation. Also functions in vivo as an activator of the phospholipase PLCD1. Active DLC1 increases cell migration velocity but reduces directionality. Required for growth factor-induced epithelial cell migration; in resting cells, interacts with TNS3 while PTEN interacts with the p85 regulatory subunit of the PI3K kinase complex but growth factor stimulation induces phosphorylation of TNS3 and PTEN, causing them to change their binding preference so that PTEN interacts with DLC1 and TNS3 interacts with p85 (PubMed:26166433). The PTEN-DLC1 complex translocates to the posterior of migrating cells to activate RHOA while the TNS3-p85 complex translocates to the leading edge of migrating cells to promote RAC1 activation (PubMed:26166433).</text>
</comment>
<comment type="subunit">
    <text evidence="9 11 14 15 16 17">Interacts with EF1A1, facilitates EF1A1 distribution to the membrane periphery and ruffles upon growth factor stimulation and suppresses cell migration (PubMed:19158340). Interacts with tensin TNS1 (via N-terminus); the interaction is decreased by phosphorylation of TNS1 (PubMed:19826001, PubMed:20798394, PubMed:26427649). Interacts with TNS3 and PTEN; in resting cells, interacts with TNS3 (via C2 tensin-type domain) but, following growth factor stimulation, TNS3 and PTEN are phosphorylated which leads to weakened interaction with TNS3 and enhanced interaction with PTEN (PubMed:26166433). Interacts (via C-terminus) with tensin TNS4 (via SH2 domain); the interaction is independent of tyrosine phosphorylation of DLC1 (PubMed:17190795).</text>
</comment>
<comment type="interaction">
    <interactant intactId="EBI-2608428">
        <id>Q96QB1</id>
    </interactant>
    <interactant intactId="EBI-1026476">
        <id>P20936</id>
        <label>RASA1</label>
    </interactant>
    <organismsDiffer>false</organismsDiffer>
    <experiments>7</experiments>
</comment>
<comment type="interaction">
    <interactant intactId="EBI-2608428">
        <id>Q96QB1</id>
    </interactant>
    <interactant intactId="EBI-8393503">
        <id>Q923Q2</id>
        <label>Stard13</label>
    </interactant>
    <organismsDiffer>true</organismsDiffer>
    <experiments>2</experiments>
</comment>
<comment type="interaction">
    <interactant intactId="EBI-15638708">
        <id>Q96QB1-1</id>
    </interactant>
    <interactant intactId="EBI-2607590">
        <id>Q04205</id>
        <label>TNS1</label>
    </interactant>
    <organismsDiffer>true</organismsDiffer>
    <experiments>7</experiments>
</comment>
<comment type="interaction">
    <interactant intactId="EBI-55037838">
        <id>Q96QB1-2</id>
    </interactant>
    <interactant intactId="EBI-7287204">
        <id>B5Z6S0</id>
        <label>cagA</label>
    </interactant>
    <organismsDiffer>true</organismsDiffer>
    <experiments>3</experiments>
</comment>
<comment type="interaction">
    <interactant intactId="EBI-55037686">
        <id>Q96QB1-4</id>
    </interactant>
    <interactant intactId="EBI-7287204">
        <id>B5Z6S0</id>
        <label>cagA</label>
    </interactant>
    <organismsDiffer>true</organismsDiffer>
    <experiments>3</experiments>
</comment>
<comment type="subcellular location">
    <subcellularLocation>
        <location>Cytoplasm</location>
    </subcellularLocation>
    <subcellularLocation>
        <location evidence="9">Cell junction</location>
        <location evidence="9">Focal adhesion</location>
    </subcellularLocation>
    <subcellularLocation>
        <location>Membrane</location>
        <topology>Peripheral membrane protein</topology>
    </subcellularLocation>
    <text>Colocalizes with EF1A1 at actin-rich regions in the cell periphery.</text>
</comment>
<comment type="alternative products">
    <event type="alternative promoter"/>
    <event type="alternative splicing"/>
    <isoform>
        <id>Q96QB1-2</id>
        <name>2</name>
        <sequence type="displayed"/>
    </isoform>
    <isoform>
        <id>Q96QB1-1</id>
        <name>1</name>
        <sequence type="described" ref="VSP_037871 VSP_037872"/>
    </isoform>
    <isoform>
        <id>Q96QB1-3</id>
        <name>3</name>
        <sequence type="described" ref="VSP_037873 VSP_037874"/>
    </isoform>
    <isoform>
        <id>Q96QB1-4</id>
        <name>4</name>
        <sequence type="described" ref="VSP_037871 VSP_044651"/>
    </isoform>
    <isoform>
        <id>Q96QB1-5</id>
        <name>5</name>
        <sequence type="described" ref="VSP_046331 VSP_046332"/>
    </isoform>
    <isoform>
        <id>Q96QB1-6</id>
        <name>6</name>
        <name>i-4</name>
        <sequence type="described" ref="VSP_053836 VSP_053837"/>
    </isoform>
</comment>
<comment type="tissue specificity">
    <text>Highest level of expression in the spleen, with rather lower levels in prostate, testis, ovary, small intestine and colon, but none in the thymus.</text>
</comment>
<comment type="domain">
    <text evidence="10">The SAM domain mediates interaction with EF1A1, and functions as an autoinhibitory regulator of RhoGAP Activity.</text>
</comment>
<comment type="domain">
    <text evidence="10">The polybasic cluster is required for activation and mediates binding to phosphatidylinositol-4,5-bisphosphate (PI(4,5)P(2)) containing membranes.</text>
</comment>
<comment type="miscellaneous">
    <molecule>Isoform 6</molecule>
    <text evidence="26">Produced by alternative promoter usage. ubiquitously expressed, significantly down-regulated in multiple carcinoma cell lines.</text>
</comment>
<comment type="sequence caution" evidence="26">
    <conflict type="erroneous initiation">
        <sequence resource="EMBL-CDS" id="AAB81637"/>
    </conflict>
    <text>Truncated N-terminus.</text>
</comment>
<comment type="sequence caution" evidence="26">
    <conflict type="erroneous initiation">
        <sequence resource="EMBL-CDS" id="BAB21814"/>
    </conflict>
    <text>Extended N-terminus.</text>
</comment>
<comment type="online information" name="Atlas of Genetics and Cytogenetics in Oncology and Haematology">
    <link uri="https://atlasgeneticsoncology.org/gene/40328/DLC1"/>
</comment>
<protein>
    <recommendedName>
        <fullName>Rho GTPase-activating protein 7</fullName>
    </recommendedName>
    <alternativeName>
        <fullName>Deleted in liver cancer 1 protein</fullName>
        <shortName>DLC-1</shortName>
    </alternativeName>
    <alternativeName>
        <fullName>HP protein</fullName>
    </alternativeName>
    <alternativeName>
        <fullName>Rho-type GTPase-activating protein 7</fullName>
    </alternativeName>
    <alternativeName>
        <fullName>START domain-containing protein 12</fullName>
        <shortName>StARD12</shortName>
    </alternativeName>
    <alternativeName>
        <fullName>StAR-related lipid transfer protein 12</fullName>
    </alternativeName>
</protein>
<gene>
    <name type="primary">DLC1</name>
    <name type="synonym">ARHGAP7</name>
    <name type="synonym">KIAA1723</name>
    <name type="synonym">STARD12</name>
</gene>